<keyword id="KW-0067">ATP-binding</keyword>
<keyword id="KW-0963">Cytoplasm</keyword>
<keyword id="KW-0418">Kinase</keyword>
<keyword id="KW-0545">Nucleotide biosynthesis</keyword>
<keyword id="KW-0547">Nucleotide-binding</keyword>
<keyword id="KW-0808">Transferase</keyword>
<proteinExistence type="inferred from homology"/>
<name>KAD_BRUME</name>
<accession>Q8YHL9</accession>
<comment type="function">
    <text evidence="1">Catalyzes the reversible transfer of the terminal phosphate group between ATP and AMP. Plays an important role in cellular energy homeostasis and in adenine nucleotide metabolism.</text>
</comment>
<comment type="catalytic activity">
    <reaction evidence="1">
        <text>AMP + ATP = 2 ADP</text>
        <dbReference type="Rhea" id="RHEA:12973"/>
        <dbReference type="ChEBI" id="CHEBI:30616"/>
        <dbReference type="ChEBI" id="CHEBI:456215"/>
        <dbReference type="ChEBI" id="CHEBI:456216"/>
        <dbReference type="EC" id="2.7.4.3"/>
    </reaction>
</comment>
<comment type="pathway">
    <text evidence="1">Purine metabolism; AMP biosynthesis via salvage pathway; AMP from ADP: step 1/1.</text>
</comment>
<comment type="subunit">
    <text evidence="1">Monomer.</text>
</comment>
<comment type="subcellular location">
    <subcellularLocation>
        <location evidence="1">Cytoplasm</location>
    </subcellularLocation>
</comment>
<comment type="domain">
    <text evidence="1">Consists of three domains, a large central CORE domain and two small peripheral domains, NMPbind and LID, which undergo movements during catalysis. The LID domain closes over the site of phosphoryl transfer upon ATP binding. Assembling and dissambling the active center during each catalytic cycle provides an effective means to prevent ATP hydrolysis.</text>
</comment>
<comment type="similarity">
    <text evidence="1">Belongs to the adenylate kinase family.</text>
</comment>
<gene>
    <name evidence="1" type="primary">adk</name>
    <name type="ordered locus">BMEI0778</name>
</gene>
<organism>
    <name type="scientific">Brucella melitensis biotype 1 (strain ATCC 23456 / CCUG 17765 / NCTC 10094 / 16M)</name>
    <dbReference type="NCBI Taxonomy" id="224914"/>
    <lineage>
        <taxon>Bacteria</taxon>
        <taxon>Pseudomonadati</taxon>
        <taxon>Pseudomonadota</taxon>
        <taxon>Alphaproteobacteria</taxon>
        <taxon>Hyphomicrobiales</taxon>
        <taxon>Brucellaceae</taxon>
        <taxon>Brucella/Ochrobactrum group</taxon>
        <taxon>Brucella</taxon>
    </lineage>
</organism>
<evidence type="ECO:0000255" key="1">
    <source>
        <dbReference type="HAMAP-Rule" id="MF_00235"/>
    </source>
</evidence>
<reference key="1">
    <citation type="journal article" date="2002" name="Proc. Natl. Acad. Sci. U.S.A.">
        <title>The genome sequence of the facultative intracellular pathogen Brucella melitensis.</title>
        <authorList>
            <person name="DelVecchio V.G."/>
            <person name="Kapatral V."/>
            <person name="Redkar R.J."/>
            <person name="Patra G."/>
            <person name="Mujer C."/>
            <person name="Los T."/>
            <person name="Ivanova N."/>
            <person name="Anderson I."/>
            <person name="Bhattacharyya A."/>
            <person name="Lykidis A."/>
            <person name="Reznik G."/>
            <person name="Jablonski L."/>
            <person name="Larsen N."/>
            <person name="D'Souza M."/>
            <person name="Bernal A."/>
            <person name="Mazur M."/>
            <person name="Goltsman E."/>
            <person name="Selkov E."/>
            <person name="Elzer P.H."/>
            <person name="Hagius S."/>
            <person name="O'Callaghan D."/>
            <person name="Letesson J.-J."/>
            <person name="Haselkorn R."/>
            <person name="Kyrpides N.C."/>
            <person name="Overbeek R."/>
        </authorList>
    </citation>
    <scope>NUCLEOTIDE SEQUENCE [LARGE SCALE GENOMIC DNA]</scope>
    <source>
        <strain>ATCC 23456 / CCUG 17765 / NCTC 10094 / 16M</strain>
    </source>
</reference>
<protein>
    <recommendedName>
        <fullName evidence="1">Adenylate kinase</fullName>
        <shortName evidence="1">AK</shortName>
        <ecNumber evidence="1">2.7.4.3</ecNumber>
    </recommendedName>
    <alternativeName>
        <fullName evidence="1">ATP-AMP transphosphorylase</fullName>
    </alternativeName>
    <alternativeName>
        <fullName evidence="1">ATP:AMP phosphotransferase</fullName>
    </alternativeName>
    <alternativeName>
        <fullName evidence="1">Adenylate monophosphate kinase</fullName>
    </alternativeName>
</protein>
<sequence>MRLILLGPPGAGKGTQAGLLTKKHGIPQLSTGDMLRAAVAQQSEIGKRAKAVMDAGQLVSDEIVNQIVSERIDAPDCANGFILDGYPRTVPQAQALSQMLSGKGLKLDAVIELKVDENALVKRMESRVAETIAKGAQVRSDDNPEAFRKRLVEYREKTAPLSSYYAGTGELRIINGMAPVEEVTAEIERILVPA</sequence>
<dbReference type="EC" id="2.7.4.3" evidence="1"/>
<dbReference type="EMBL" id="AE008917">
    <property type="protein sequence ID" value="AAL51959.1"/>
    <property type="molecule type" value="Genomic_DNA"/>
</dbReference>
<dbReference type="PIR" id="AD3349">
    <property type="entry name" value="AD3349"/>
</dbReference>
<dbReference type="RefSeq" id="WP_004683918.1">
    <property type="nucleotide sequence ID" value="NZ_GG703780.1"/>
</dbReference>
<dbReference type="SMR" id="Q8YHL9"/>
<dbReference type="GeneID" id="29593595"/>
<dbReference type="KEGG" id="bme:BMEI0778"/>
<dbReference type="KEGG" id="bmel:DK63_644"/>
<dbReference type="PATRIC" id="fig|224914.52.peg.675"/>
<dbReference type="eggNOG" id="COG0563">
    <property type="taxonomic scope" value="Bacteria"/>
</dbReference>
<dbReference type="PhylomeDB" id="Q8YHL9"/>
<dbReference type="UniPathway" id="UPA00588">
    <property type="reaction ID" value="UER00649"/>
</dbReference>
<dbReference type="Proteomes" id="UP000000419">
    <property type="component" value="Chromosome I"/>
</dbReference>
<dbReference type="GO" id="GO:0005737">
    <property type="term" value="C:cytoplasm"/>
    <property type="evidence" value="ECO:0007669"/>
    <property type="project" value="UniProtKB-SubCell"/>
</dbReference>
<dbReference type="GO" id="GO:0004017">
    <property type="term" value="F:adenylate kinase activity"/>
    <property type="evidence" value="ECO:0007669"/>
    <property type="project" value="UniProtKB-UniRule"/>
</dbReference>
<dbReference type="GO" id="GO:0005524">
    <property type="term" value="F:ATP binding"/>
    <property type="evidence" value="ECO:0007669"/>
    <property type="project" value="UniProtKB-UniRule"/>
</dbReference>
<dbReference type="GO" id="GO:0044209">
    <property type="term" value="P:AMP salvage"/>
    <property type="evidence" value="ECO:0007669"/>
    <property type="project" value="UniProtKB-UniRule"/>
</dbReference>
<dbReference type="CDD" id="cd01428">
    <property type="entry name" value="ADK"/>
    <property type="match status" value="1"/>
</dbReference>
<dbReference type="Gene3D" id="3.40.50.300">
    <property type="entry name" value="P-loop containing nucleotide triphosphate hydrolases"/>
    <property type="match status" value="1"/>
</dbReference>
<dbReference type="HAMAP" id="MF_00235">
    <property type="entry name" value="Adenylate_kinase_Adk"/>
    <property type="match status" value="1"/>
</dbReference>
<dbReference type="InterPro" id="IPR006259">
    <property type="entry name" value="Adenyl_kin_sub"/>
</dbReference>
<dbReference type="InterPro" id="IPR000850">
    <property type="entry name" value="Adenylat/UMP-CMP_kin"/>
</dbReference>
<dbReference type="InterPro" id="IPR033690">
    <property type="entry name" value="Adenylat_kinase_CS"/>
</dbReference>
<dbReference type="InterPro" id="IPR027417">
    <property type="entry name" value="P-loop_NTPase"/>
</dbReference>
<dbReference type="NCBIfam" id="TIGR01351">
    <property type="entry name" value="adk"/>
    <property type="match status" value="1"/>
</dbReference>
<dbReference type="NCBIfam" id="NF001381">
    <property type="entry name" value="PRK00279.1-3"/>
    <property type="match status" value="1"/>
</dbReference>
<dbReference type="NCBIfam" id="NF011100">
    <property type="entry name" value="PRK14527.1"/>
    <property type="match status" value="1"/>
</dbReference>
<dbReference type="NCBIfam" id="NF011101">
    <property type="entry name" value="PRK14528.1"/>
    <property type="match status" value="1"/>
</dbReference>
<dbReference type="NCBIfam" id="NF011104">
    <property type="entry name" value="PRK14531.1"/>
    <property type="match status" value="1"/>
</dbReference>
<dbReference type="NCBIfam" id="NF011105">
    <property type="entry name" value="PRK14532.1"/>
    <property type="match status" value="1"/>
</dbReference>
<dbReference type="PANTHER" id="PTHR23359">
    <property type="entry name" value="NUCLEOTIDE KINASE"/>
    <property type="match status" value="1"/>
</dbReference>
<dbReference type="Pfam" id="PF00406">
    <property type="entry name" value="ADK"/>
    <property type="match status" value="1"/>
</dbReference>
<dbReference type="PRINTS" id="PR00094">
    <property type="entry name" value="ADENYLTKNASE"/>
</dbReference>
<dbReference type="SUPFAM" id="SSF52540">
    <property type="entry name" value="P-loop containing nucleoside triphosphate hydrolases"/>
    <property type="match status" value="1"/>
</dbReference>
<dbReference type="PROSITE" id="PS00113">
    <property type="entry name" value="ADENYLATE_KINASE"/>
    <property type="match status" value="1"/>
</dbReference>
<feature type="chain" id="PRO_0000158741" description="Adenylate kinase">
    <location>
        <begin position="1"/>
        <end position="194"/>
    </location>
</feature>
<feature type="region of interest" description="NMP" evidence="1">
    <location>
        <begin position="30"/>
        <end position="59"/>
    </location>
</feature>
<feature type="region of interest" description="LID" evidence="1">
    <location>
        <begin position="126"/>
        <end position="142"/>
    </location>
</feature>
<feature type="binding site" evidence="1">
    <location>
        <begin position="10"/>
        <end position="15"/>
    </location>
    <ligand>
        <name>ATP</name>
        <dbReference type="ChEBI" id="CHEBI:30616"/>
    </ligand>
</feature>
<feature type="binding site" evidence="1">
    <location>
        <position position="31"/>
    </location>
    <ligand>
        <name>AMP</name>
        <dbReference type="ChEBI" id="CHEBI:456215"/>
    </ligand>
</feature>
<feature type="binding site" evidence="1">
    <location>
        <position position="36"/>
    </location>
    <ligand>
        <name>AMP</name>
        <dbReference type="ChEBI" id="CHEBI:456215"/>
    </ligand>
</feature>
<feature type="binding site" evidence="1">
    <location>
        <begin position="57"/>
        <end position="59"/>
    </location>
    <ligand>
        <name>AMP</name>
        <dbReference type="ChEBI" id="CHEBI:456215"/>
    </ligand>
</feature>
<feature type="binding site" evidence="1">
    <location>
        <begin position="85"/>
        <end position="88"/>
    </location>
    <ligand>
        <name>AMP</name>
        <dbReference type="ChEBI" id="CHEBI:456215"/>
    </ligand>
</feature>
<feature type="binding site" evidence="1">
    <location>
        <position position="92"/>
    </location>
    <ligand>
        <name>AMP</name>
        <dbReference type="ChEBI" id="CHEBI:456215"/>
    </ligand>
</feature>
<feature type="binding site" evidence="1">
    <location>
        <position position="127"/>
    </location>
    <ligand>
        <name>ATP</name>
        <dbReference type="ChEBI" id="CHEBI:30616"/>
    </ligand>
</feature>
<feature type="binding site" evidence="1">
    <location>
        <position position="139"/>
    </location>
    <ligand>
        <name>AMP</name>
        <dbReference type="ChEBI" id="CHEBI:456215"/>
    </ligand>
</feature>
<feature type="binding site" evidence="1">
    <location>
        <position position="150"/>
    </location>
    <ligand>
        <name>AMP</name>
        <dbReference type="ChEBI" id="CHEBI:456215"/>
    </ligand>
</feature>
<feature type="binding site" evidence="1">
    <location>
        <position position="178"/>
    </location>
    <ligand>
        <name>ATP</name>
        <dbReference type="ChEBI" id="CHEBI:30616"/>
    </ligand>
</feature>